<feature type="chain" id="PRO_0000039441" description="Capsid protein VP1">
    <location>
        <begin position="1"/>
        <end position="727"/>
    </location>
</feature>
<feature type="region of interest" description="Disordered" evidence="3">
    <location>
        <begin position="1"/>
        <end position="38"/>
    </location>
</feature>
<feature type="region of interest" description="Phospholipase A2-like" evidence="1">
    <location>
        <begin position="19"/>
        <end position="64"/>
    </location>
</feature>
<feature type="region of interest" description="Disordered" evidence="3">
    <location>
        <begin position="95"/>
        <end position="120"/>
    </location>
</feature>
<feature type="region of interest" description="Disordered" evidence="3">
    <location>
        <begin position="141"/>
        <end position="184"/>
    </location>
</feature>
<feature type="short sequence motif" description="Nuclear localization signal" evidence="2">
    <location>
        <begin position="4"/>
        <end position="13"/>
    </location>
</feature>
<feature type="compositionally biased region" description="Basic residues" evidence="3">
    <location>
        <begin position="1"/>
        <end position="10"/>
    </location>
</feature>
<feature type="compositionally biased region" description="Polar residues" evidence="3">
    <location>
        <begin position="25"/>
        <end position="35"/>
    </location>
</feature>
<feature type="compositionally biased region" description="Gly residues" evidence="3">
    <location>
        <begin position="166"/>
        <end position="183"/>
    </location>
</feature>
<feature type="binding site" evidence="1">
    <location>
        <position position="323"/>
    </location>
    <ligand>
        <name>Mg(2+)</name>
        <dbReference type="ChEBI" id="CHEBI:18420"/>
        <label>1</label>
    </ligand>
</feature>
<feature type="disulfide bond">
    <location>
        <begin position="633"/>
        <end position="637"/>
    </location>
</feature>
<feature type="splice variant" id="VSP_041146" description="In isoform VP2." evidence="4">
    <location>
        <begin position="1"/>
        <end position="143"/>
    </location>
</feature>
<feature type="strand" evidence="5">
    <location>
        <begin position="192"/>
        <end position="196"/>
    </location>
</feature>
<feature type="strand" evidence="5">
    <location>
        <begin position="198"/>
        <end position="215"/>
    </location>
</feature>
<feature type="strand" evidence="5">
    <location>
        <begin position="223"/>
        <end position="227"/>
    </location>
</feature>
<feature type="helix" evidence="5">
    <location>
        <begin position="230"/>
        <end position="233"/>
    </location>
</feature>
<feature type="helix" evidence="6">
    <location>
        <begin position="239"/>
        <end position="241"/>
    </location>
</feature>
<feature type="strand" evidence="5">
    <location>
        <begin position="245"/>
        <end position="254"/>
    </location>
</feature>
<feature type="helix" evidence="5">
    <location>
        <begin position="260"/>
        <end position="263"/>
    </location>
</feature>
<feature type="helix" evidence="5">
    <location>
        <begin position="266"/>
        <end position="275"/>
    </location>
</feature>
<feature type="strand" evidence="5">
    <location>
        <begin position="276"/>
        <end position="297"/>
    </location>
</feature>
<feature type="turn" evidence="5">
    <location>
        <begin position="302"/>
        <end position="304"/>
    </location>
</feature>
<feature type="strand" evidence="5">
    <location>
        <begin position="307"/>
        <end position="310"/>
    </location>
</feature>
<feature type="strand" evidence="5">
    <location>
        <begin position="316"/>
        <end position="321"/>
    </location>
</feature>
<feature type="helix" evidence="5">
    <location>
        <begin position="331"/>
        <end position="334"/>
    </location>
</feature>
<feature type="strand" evidence="5">
    <location>
        <begin position="349"/>
        <end position="354"/>
    </location>
</feature>
<feature type="strand" evidence="5">
    <location>
        <begin position="358"/>
        <end position="361"/>
    </location>
</feature>
<feature type="strand" evidence="5">
    <location>
        <begin position="374"/>
        <end position="378"/>
    </location>
</feature>
<feature type="helix" evidence="5">
    <location>
        <begin position="381"/>
        <end position="383"/>
    </location>
</feature>
<feature type="helix" evidence="5">
    <location>
        <begin position="389"/>
        <end position="392"/>
    </location>
</feature>
<feature type="strand" evidence="5">
    <location>
        <begin position="395"/>
        <end position="398"/>
    </location>
</feature>
<feature type="strand" evidence="5">
    <location>
        <begin position="416"/>
        <end position="418"/>
    </location>
</feature>
<feature type="helix" evidence="5">
    <location>
        <begin position="425"/>
        <end position="427"/>
    </location>
</feature>
<feature type="helix" evidence="7">
    <location>
        <begin position="453"/>
        <end position="455"/>
    </location>
</feature>
<feature type="turn" evidence="5">
    <location>
        <begin position="470"/>
        <end position="472"/>
    </location>
</feature>
<feature type="strand" evidence="5">
    <location>
        <begin position="476"/>
        <end position="480"/>
    </location>
</feature>
<feature type="strand" evidence="5">
    <location>
        <begin position="488"/>
        <end position="491"/>
    </location>
</feature>
<feature type="strand" evidence="5">
    <location>
        <begin position="494"/>
        <end position="497"/>
    </location>
</feature>
<feature type="turn" evidence="7">
    <location>
        <begin position="510"/>
        <end position="512"/>
    </location>
</feature>
<feature type="turn" evidence="6">
    <location>
        <begin position="513"/>
        <end position="517"/>
    </location>
</feature>
<feature type="strand" evidence="5">
    <location>
        <begin position="520"/>
        <end position="523"/>
    </location>
</feature>
<feature type="turn" evidence="7">
    <location>
        <begin position="525"/>
        <end position="528"/>
    </location>
</feature>
<feature type="strand" evidence="5">
    <location>
        <begin position="539"/>
        <end position="542"/>
    </location>
</feature>
<feature type="strand" evidence="5">
    <location>
        <begin position="547"/>
        <end position="549"/>
    </location>
</feature>
<feature type="helix" evidence="5">
    <location>
        <begin position="553"/>
        <end position="555"/>
    </location>
</feature>
<feature type="helix" evidence="5">
    <location>
        <begin position="569"/>
        <end position="571"/>
    </location>
</feature>
<feature type="strand" evidence="5">
    <location>
        <begin position="575"/>
        <end position="577"/>
    </location>
</feature>
<feature type="strand" evidence="8">
    <location>
        <begin position="579"/>
        <end position="581"/>
    </location>
</feature>
<feature type="strand" evidence="6">
    <location>
        <begin position="582"/>
        <end position="584"/>
    </location>
</feature>
<feature type="helix" evidence="5">
    <location>
        <begin position="587"/>
        <end position="590"/>
    </location>
</feature>
<feature type="strand" evidence="5">
    <location>
        <begin position="613"/>
        <end position="615"/>
    </location>
</feature>
<feature type="strand" evidence="5">
    <location>
        <begin position="619"/>
        <end position="621"/>
    </location>
</feature>
<feature type="strand" evidence="5">
    <location>
        <begin position="630"/>
        <end position="635"/>
    </location>
</feature>
<feature type="strand" evidence="5">
    <location>
        <begin position="640"/>
        <end position="645"/>
    </location>
</feature>
<feature type="strand" evidence="6">
    <location>
        <begin position="655"/>
        <end position="657"/>
    </location>
</feature>
<feature type="strand" evidence="5">
    <location>
        <begin position="666"/>
        <end position="682"/>
    </location>
</feature>
<feature type="strand" evidence="5">
    <location>
        <begin position="687"/>
        <end position="689"/>
    </location>
</feature>
<feature type="turn" evidence="5">
    <location>
        <begin position="698"/>
        <end position="700"/>
    </location>
</feature>
<feature type="helix" evidence="5">
    <location>
        <begin position="701"/>
        <end position="703"/>
    </location>
</feature>
<feature type="strand" evidence="7">
    <location>
        <begin position="717"/>
        <end position="719"/>
    </location>
</feature>
<feature type="strand" evidence="7">
    <location>
        <begin position="722"/>
        <end position="724"/>
    </location>
</feature>
<accession>P24840</accession>
<comment type="function">
    <text evidence="1">Capsid protein self-assembles to form an icosahedral capsid with a T=1 symmetry, about 22 nm in diameter, and consisting of 60 copies of two size variants of the capsid proteins, VP1 and VP2, which differ by the presence of an N-terminal extension in the minor protein VP1. The capsid encapsulates the genomic ssDNA. Capsid proteins are responsible for the attachment to host cell receptors. This attachment induces virion internalization predominantly through clathrin-dependent endocytosis. Binding to the host receptors also induces capsid rearrangements leading to surface exposure of VP1 N-terminus, specifically its phospholipase A2-like region and putative nuclear localization signal(s). VP1 N-terminus might serve as a lipolytic enzyme to breach the endosomal membrane during entry into host cell and might contribute to virus transport to the nucleus (By similarity).</text>
</comment>
<comment type="subunit">
    <text evidence="1">Interacts with host TFRC.</text>
</comment>
<comment type="subcellular location">
    <subcellularLocation>
        <location evidence="1">Virion</location>
    </subcellularLocation>
    <subcellularLocation>
        <location evidence="4">Host nucleus</location>
    </subcellularLocation>
</comment>
<comment type="alternative products">
    <event type="alternative splicing"/>
    <isoform>
        <id>P24840-1</id>
        <name>VP1</name>
        <sequence type="displayed"/>
    </isoform>
    <isoform>
        <id>P24840-2</id>
        <name>VP2</name>
        <sequence type="described" ref="VSP_041146"/>
    </isoform>
</comment>
<comment type="domain">
    <text evidence="1">The N-terminus of VP1 is sequestered within the mature capsid. It contains a phospholipase A2-like region and nuclear localization signals that might be exposed by capsid modifications during virus entry (By similarity).</text>
</comment>
<comment type="miscellaneous">
    <text evidence="1">The capsids of autonomous parvoviruses expose a proportion of VP2 N-terminus and part of that sequence can be cleaved of to form VP3.</text>
</comment>
<comment type="miscellaneous">
    <molecule>Isoform VP1</molecule>
    <text>Minor splicing isoform.</text>
</comment>
<comment type="miscellaneous">
    <molecule>Isoform VP2</molecule>
    <text evidence="4">Major splicing isoform produced by deletion of the initiating AUG for VP1 and downstream translation of VP2.</text>
</comment>
<comment type="similarity">
    <text evidence="4">Belongs to the parvoviridae capsid protein family.</text>
</comment>
<comment type="online information" name="Virus Particle ExploreR db">
    <link uri="https://viperdb.org/Info_Page.php?VDB=1fpv"/>
    <text>Icosahedral capsid structure</text>
</comment>
<name>CAPSD_FPV19</name>
<sequence length="727" mass="80386">MAPPAKRARRGLVPPGYKYLGPGNSLDQGEPTNPSDAAAKEHDEAYAAYLRSGKNPYLYFSPADQRFIDQTKDAKDWGGKIGHYFFRAKKAIAPVLTDTPDHPSTSRPTKPTKRSKPPPHIFINLAKKKKAGAGQVKRDNLAPMSDGAVQPDGGQPAVRNERATGSGNGSGGGGGGGSGGVGISTGTFNNQTEFKFLENGWVEITANSSRLVHLNMPESENYKRVVVNNMDKTAVKGNMALDDIHVQIVTPWSLVDANAWGVWFNPGDWQLIVNTMSELHLVSFEQEIFNVVLKTVSESATQPPTKVYNNDLTASLMVALDSNNTMPFTPAAMRSETLGFYPWKPTIPTPWRYYFQWDRTLIPSHTGTSGTPTNVYHGTDPDDVQFYTIENSVPVHLLRTGDEFATGTFFFDCKPCRLTHTWQTNRALGLPPFLNSLPQSEGATNFGDIGVQQDKRRGVTQMGNTDYITEATIMRPAEVGYSAPYYSFEASTQGPFKTPIAAGRGGAQTDENQAADGDPRYAFGRQHGQKTTTTGETPERFTYIAHQDTGRYPEGDWIQNINFNLPVTNDNVLLPTDPIGGKTGINYTNIFNTYGPLTALNNVPPVYPNGQIWDKEFDTDLKPRLHVNAPFVCQNNCPGQLFVKVAPNLTNEYDPDASANMSRIVTYSDFWWKGKLVFKAKLRASHTWNPIQQMSINVDNQFNYVPNNIGAMKIVYEKSQLAPRKLY</sequence>
<reference key="1">
    <citation type="journal article" date="1990" name="J. Gen. Virol.">
        <title>Nucleotide sequence of feline panleukopenia virus: comparison with canine parvovirus identifies host-specific differences.</title>
        <authorList>
            <person name="Martyn J.C."/>
            <person name="Davidson B.E."/>
            <person name="Studdert M.J."/>
        </authorList>
    </citation>
    <scope>NUCLEOTIDE SEQUENCE [GENOMIC DNA]</scope>
    <source>
        <strain>193/70</strain>
    </source>
</reference>
<reference key="2">
    <citation type="journal article" date="1991" name="Virology">
        <title>Mapping specific functions in the capsid structure of canine parvovirus and feline panleukopenia virus using infectious plasmid clones.</title>
        <authorList>
            <person name="Parrish C.R."/>
        </authorList>
    </citation>
    <scope>NUCLEOTIDE SEQUENCE [GENOMIC DNA]</scope>
    <source>
        <strain>CU-4</strain>
    </source>
</reference>
<reference key="3">
    <citation type="journal article" date="1993" name="Proteins">
        <title>Structure determination of feline panleukopenia virus empty particles.</title>
        <authorList>
            <person name="Agbandje M."/>
            <person name="McKenna R."/>
            <person name="Rossmann M.G."/>
            <person name="Strassheim M.L."/>
            <person name="Parrish C.R."/>
        </authorList>
    </citation>
    <scope>X-RAY CRYSTALLOGRAPHY (3.3 ANGSTROMS) OF 144-727</scope>
</reference>
<reference key="4">
    <citation type="journal article" date="2000" name="J. Mol. Biol.">
        <title>Host range and variability of calcium binding by surface loops in the capsids of canine and feline parvoviruses.</title>
        <authorList>
            <person name="Simpson A.A."/>
            <person name="Chandrasekar V."/>
            <person name="Hebert B."/>
            <person name="Sullivan G.M."/>
            <person name="Rossmann M.G."/>
            <person name="Parrish C.R."/>
        </authorList>
    </citation>
    <scope>X-RAY CRYSTALLOGRAPHY (3.0 ANGSTROMS) OF 180-727</scope>
</reference>
<organism>
    <name type="scientific">Feline panleukopenia virus (strain 193)</name>
    <name type="common">FPV</name>
    <dbReference type="NCBI Taxonomy" id="10787"/>
    <lineage>
        <taxon>Viruses</taxon>
        <taxon>Monodnaviria</taxon>
        <taxon>Shotokuvirae</taxon>
        <taxon>Cossaviricota</taxon>
        <taxon>Quintoviricetes</taxon>
        <taxon>Piccovirales</taxon>
        <taxon>Parvoviridae</taxon>
        <taxon>Parvovirinae</taxon>
        <taxon>Protoparvovirus</taxon>
        <taxon>Protoparvovirus carnivoran1</taxon>
    </lineage>
</organism>
<keyword id="KW-0002">3D-structure</keyword>
<keyword id="KW-0025">Alternative splicing</keyword>
<keyword id="KW-0167">Capsid protein</keyword>
<keyword id="KW-1165">Clathrin-mediated endocytosis of virus by host</keyword>
<keyword id="KW-1176">Cytoplasmic inwards viral transport</keyword>
<keyword id="KW-1015">Disulfide bond</keyword>
<keyword id="KW-1048">Host nucleus</keyword>
<keyword id="KW-0945">Host-virus interaction</keyword>
<keyword id="KW-0460">Magnesium</keyword>
<keyword id="KW-0479">Metal-binding</keyword>
<keyword id="KW-1177">Microtubular inwards viral transport</keyword>
<keyword id="KW-1140">T=1 icosahedral capsid protein</keyword>
<keyword id="KW-1161">Viral attachment to host cell</keyword>
<keyword id="KW-1162">Viral penetration into host cytoplasm</keyword>
<keyword id="KW-1163">Viral penetration into host nucleus</keyword>
<keyword id="KW-1173">Viral penetration via permeabilization of host membrane</keyword>
<keyword id="KW-0946">Virion</keyword>
<keyword id="KW-1164">Virus endocytosis by host</keyword>
<keyword id="KW-1160">Virus entry into host cell</keyword>
<dbReference type="EMBL" id="X55115">
    <property type="protein sequence ID" value="CAA38911.1"/>
    <property type="molecule type" value="Genomic_DNA"/>
</dbReference>
<dbReference type="EMBL" id="M38246">
    <property type="protein sequence ID" value="AAC37928.1"/>
    <property type="molecule type" value="Genomic_DNA"/>
</dbReference>
<dbReference type="EMBL" id="M38246">
    <property type="protein sequence ID" value="AAC37929.1"/>
    <property type="molecule type" value="Genomic_DNA"/>
</dbReference>
<dbReference type="PIR" id="B36608">
    <property type="entry name" value="VCPVFP"/>
</dbReference>
<dbReference type="PDB" id="1C8E">
    <property type="method" value="X-ray"/>
    <property type="resolution" value="3.00 A"/>
    <property type="chains" value="A=180-727"/>
</dbReference>
<dbReference type="PDB" id="1C8F">
    <property type="method" value="X-ray"/>
    <property type="resolution" value="3.00 A"/>
    <property type="chains" value="A=180-727"/>
</dbReference>
<dbReference type="PDB" id="1C8G">
    <property type="method" value="X-ray"/>
    <property type="resolution" value="3.00 A"/>
    <property type="chains" value="A=180-727"/>
</dbReference>
<dbReference type="PDB" id="1FPV">
    <property type="method" value="X-ray"/>
    <property type="resolution" value="3.30 A"/>
    <property type="chains" value="A=144-727"/>
</dbReference>
<dbReference type="PDBsum" id="1C8E"/>
<dbReference type="PDBsum" id="1C8F"/>
<dbReference type="PDBsum" id="1C8G"/>
<dbReference type="PDBsum" id="1FPV"/>
<dbReference type="SMR" id="P24840"/>
<dbReference type="EvolutionaryTrace" id="P24840"/>
<dbReference type="Proteomes" id="UP000002478">
    <property type="component" value="Genome"/>
</dbReference>
<dbReference type="GO" id="GO:0043657">
    <property type="term" value="C:host cell"/>
    <property type="evidence" value="ECO:0007669"/>
    <property type="project" value="GOC"/>
</dbReference>
<dbReference type="GO" id="GO:0042025">
    <property type="term" value="C:host cell nucleus"/>
    <property type="evidence" value="ECO:0007669"/>
    <property type="project" value="UniProtKB-SubCell"/>
</dbReference>
<dbReference type="GO" id="GO:0039615">
    <property type="term" value="C:T=1 icosahedral viral capsid"/>
    <property type="evidence" value="ECO:0007669"/>
    <property type="project" value="UniProtKB-KW"/>
</dbReference>
<dbReference type="GO" id="GO:0046872">
    <property type="term" value="F:metal ion binding"/>
    <property type="evidence" value="ECO:0007669"/>
    <property type="project" value="UniProtKB-KW"/>
</dbReference>
<dbReference type="GO" id="GO:0005198">
    <property type="term" value="F:structural molecule activity"/>
    <property type="evidence" value="ECO:0007669"/>
    <property type="project" value="InterPro"/>
</dbReference>
<dbReference type="GO" id="GO:0075512">
    <property type="term" value="P:clathrin-dependent endocytosis of virus by host cell"/>
    <property type="evidence" value="ECO:0007669"/>
    <property type="project" value="UniProtKB-KW"/>
</dbReference>
<dbReference type="GO" id="GO:0075521">
    <property type="term" value="P:microtubule-dependent intracellular transport of viral material towards nucleus"/>
    <property type="evidence" value="ECO:0007669"/>
    <property type="project" value="UniProtKB-KW"/>
</dbReference>
<dbReference type="GO" id="GO:0140267">
    <property type="term" value="P:symbiont entry into host cell via permeabilization of host membrane"/>
    <property type="evidence" value="ECO:0007669"/>
    <property type="project" value="UniProtKB-KW"/>
</dbReference>
<dbReference type="GO" id="GO:0075732">
    <property type="term" value="P:viral penetration into host nucleus"/>
    <property type="evidence" value="ECO:0007669"/>
    <property type="project" value="UniProtKB-KW"/>
</dbReference>
<dbReference type="GO" id="GO:0019062">
    <property type="term" value="P:virion attachment to host cell"/>
    <property type="evidence" value="ECO:0007669"/>
    <property type="project" value="UniProtKB-KW"/>
</dbReference>
<dbReference type="Gene3D" id="2.170.30.10">
    <property type="entry name" value="Parvovirus coat protein VP1/VP2"/>
    <property type="match status" value="1"/>
</dbReference>
<dbReference type="InterPro" id="IPR016184">
    <property type="entry name" value="Capsid/spike_ssDNA_virus"/>
</dbReference>
<dbReference type="InterPro" id="IPR001403">
    <property type="entry name" value="Parvovirus_coat"/>
</dbReference>
<dbReference type="InterPro" id="IPR013607">
    <property type="entry name" value="Phospholipase_A2-like"/>
</dbReference>
<dbReference type="InterPro" id="IPR036952">
    <property type="entry name" value="VP1/VP2"/>
</dbReference>
<dbReference type="Pfam" id="PF00740">
    <property type="entry name" value="Parvo_coat"/>
    <property type="match status" value="1"/>
</dbReference>
<dbReference type="Pfam" id="PF08398">
    <property type="entry name" value="Phospholip_A2_4"/>
    <property type="match status" value="1"/>
</dbReference>
<dbReference type="SUPFAM" id="SSF88645">
    <property type="entry name" value="ssDNA viruses"/>
    <property type="match status" value="1"/>
</dbReference>
<evidence type="ECO:0000250" key="1"/>
<evidence type="ECO:0000255" key="2"/>
<evidence type="ECO:0000256" key="3">
    <source>
        <dbReference type="SAM" id="MobiDB-lite"/>
    </source>
</evidence>
<evidence type="ECO:0000305" key="4"/>
<evidence type="ECO:0007829" key="5">
    <source>
        <dbReference type="PDB" id="1C8E"/>
    </source>
</evidence>
<evidence type="ECO:0007829" key="6">
    <source>
        <dbReference type="PDB" id="1C8F"/>
    </source>
</evidence>
<evidence type="ECO:0007829" key="7">
    <source>
        <dbReference type="PDB" id="1C8G"/>
    </source>
</evidence>
<evidence type="ECO:0007829" key="8">
    <source>
        <dbReference type="PDB" id="1FPV"/>
    </source>
</evidence>
<proteinExistence type="evidence at protein level"/>
<protein>
    <recommendedName>
        <fullName>Capsid protein VP1</fullName>
    </recommendedName>
    <alternativeName>
        <fullName>Coat protein VP1</fullName>
    </alternativeName>
</protein>
<organismHost>
    <name type="scientific">Felidae</name>
    <name type="common">cat family</name>
    <dbReference type="NCBI Taxonomy" id="9681"/>
</organismHost>
<organismHost>
    <name type="scientific">Nasua nasua</name>
    <name type="common">Ring-tailed coati</name>
    <dbReference type="NCBI Taxonomy" id="9651"/>
</organismHost>
<organismHost>
    <name type="scientific">Procyon lotor</name>
    <name type="common">Raccoon</name>
    <dbReference type="NCBI Taxonomy" id="9654"/>
</organismHost>